<evidence type="ECO:0000250" key="1">
    <source>
        <dbReference type="UniProtKB" id="P21462"/>
    </source>
</evidence>
<evidence type="ECO:0000250" key="2">
    <source>
        <dbReference type="UniProtKB" id="P33766"/>
    </source>
</evidence>
<evidence type="ECO:0000255" key="3"/>
<evidence type="ECO:0000255" key="4">
    <source>
        <dbReference type="PROSITE-ProRule" id="PRU00521"/>
    </source>
</evidence>
<evidence type="ECO:0000256" key="5">
    <source>
        <dbReference type="SAM" id="MobiDB-lite"/>
    </source>
</evidence>
<feature type="chain" id="PRO_0000069445" description="fMet-Leu-Phe receptor">
    <location>
        <begin position="1" status="less than"/>
        <end position="346" status="greater than"/>
    </location>
</feature>
<feature type="topological domain" description="Extracellular" evidence="3">
    <location>
        <begin position="1" status="less than"/>
        <end position="24"/>
    </location>
</feature>
<feature type="transmembrane region" description="Helical; Name=1" evidence="3">
    <location>
        <begin position="25"/>
        <end position="47"/>
    </location>
</feature>
<feature type="topological domain" description="Cytoplasmic" evidence="3">
    <location>
        <begin position="48"/>
        <end position="58"/>
    </location>
</feature>
<feature type="transmembrane region" description="Helical; Name=2" evidence="3">
    <location>
        <begin position="59"/>
        <end position="80"/>
    </location>
</feature>
<feature type="topological domain" description="Extracellular" evidence="3">
    <location>
        <begin position="81"/>
        <end position="97"/>
    </location>
</feature>
<feature type="transmembrane region" description="Helical; Name=3" evidence="3">
    <location>
        <begin position="98"/>
        <end position="118"/>
    </location>
</feature>
<feature type="topological domain" description="Cytoplasmic" evidence="3">
    <location>
        <begin position="119"/>
        <end position="137"/>
    </location>
</feature>
<feature type="transmembrane region" description="Helical; Name=4" evidence="3">
    <location>
        <begin position="138"/>
        <end position="159"/>
    </location>
</feature>
<feature type="topological domain" description="Extracellular" evidence="3">
    <location>
        <begin position="160"/>
        <end position="202"/>
    </location>
</feature>
<feature type="transmembrane region" description="Helical; Name=5" evidence="3">
    <location>
        <begin position="203"/>
        <end position="223"/>
    </location>
</feature>
<feature type="topological domain" description="Cytoplasmic" evidence="3">
    <location>
        <begin position="224"/>
        <end position="239"/>
    </location>
</feature>
<feature type="transmembrane region" description="Helical; Name=6" evidence="3">
    <location>
        <begin position="240"/>
        <end position="263"/>
    </location>
</feature>
<feature type="topological domain" description="Extracellular" evidence="3">
    <location>
        <begin position="264"/>
        <end position="282"/>
    </location>
</feature>
<feature type="transmembrane region" description="Helical; Name=7" evidence="3">
    <location>
        <begin position="283"/>
        <end position="302"/>
    </location>
</feature>
<feature type="topological domain" description="Cytoplasmic" evidence="3">
    <location>
        <begin position="303"/>
        <end position="346" status="greater than"/>
    </location>
</feature>
<feature type="region of interest" description="Disordered" evidence="5">
    <location>
        <begin position="321"/>
        <end position="346"/>
    </location>
</feature>
<feature type="compositionally biased region" description="Polar residues" evidence="5">
    <location>
        <begin position="324"/>
        <end position="338"/>
    </location>
</feature>
<feature type="glycosylation site" description="N-linked (GlcNAc...) asparagine" evidence="3">
    <location>
        <position position="1"/>
    </location>
</feature>
<feature type="glycosylation site" description="N-linked (GlcNAc...) asparagine" evidence="3">
    <location>
        <position position="7"/>
    </location>
</feature>
<feature type="disulfide bond" evidence="4">
    <location>
        <begin position="95"/>
        <end position="173"/>
    </location>
</feature>
<feature type="non-terminal residue">
    <location>
        <position position="1"/>
    </location>
</feature>
<feature type="non-terminal residue">
    <location>
        <position position="346"/>
    </location>
</feature>
<dbReference type="EMBL" id="X97734">
    <property type="protein sequence ID" value="CAA66318.1"/>
    <property type="molecule type" value="Genomic_DNA"/>
</dbReference>
<dbReference type="SMR" id="P79189"/>
<dbReference type="FunCoup" id="P79189">
    <property type="interactions" value="618"/>
</dbReference>
<dbReference type="STRING" id="9544.ENSMMUP00000017142"/>
<dbReference type="GlyCosmos" id="P79189">
    <property type="glycosylation" value="2 sites, No reported glycans"/>
</dbReference>
<dbReference type="PaxDb" id="9544-ENSMMUP00000017142"/>
<dbReference type="eggNOG" id="KOG3656">
    <property type="taxonomic scope" value="Eukaryota"/>
</dbReference>
<dbReference type="InParanoid" id="P79189"/>
<dbReference type="Proteomes" id="UP000006718">
    <property type="component" value="Unassembled WGS sequence"/>
</dbReference>
<dbReference type="GO" id="GO:0005886">
    <property type="term" value="C:plasma membrane"/>
    <property type="evidence" value="ECO:0000318"/>
    <property type="project" value="GO_Central"/>
</dbReference>
<dbReference type="GO" id="GO:0004875">
    <property type="term" value="F:complement receptor activity"/>
    <property type="evidence" value="ECO:0000318"/>
    <property type="project" value="GO_Central"/>
</dbReference>
<dbReference type="GO" id="GO:0004930">
    <property type="term" value="F:G protein-coupled receptor activity"/>
    <property type="evidence" value="ECO:0000250"/>
    <property type="project" value="UniProtKB"/>
</dbReference>
<dbReference type="GO" id="GO:0004982">
    <property type="term" value="F:N-formyl peptide receptor activity"/>
    <property type="evidence" value="ECO:0000318"/>
    <property type="project" value="GO_Central"/>
</dbReference>
<dbReference type="GO" id="GO:0006935">
    <property type="term" value="P:chemotaxis"/>
    <property type="evidence" value="ECO:0007669"/>
    <property type="project" value="UniProtKB-KW"/>
</dbReference>
<dbReference type="GO" id="GO:0002430">
    <property type="term" value="P:complement receptor mediated signaling pathway"/>
    <property type="evidence" value="ECO:0000318"/>
    <property type="project" value="GO_Central"/>
</dbReference>
<dbReference type="GO" id="GO:0006954">
    <property type="term" value="P:inflammatory response"/>
    <property type="evidence" value="ECO:0000318"/>
    <property type="project" value="GO_Central"/>
</dbReference>
<dbReference type="GO" id="GO:0007200">
    <property type="term" value="P:phospholipase C-activating G protein-coupled receptor signaling pathway"/>
    <property type="evidence" value="ECO:0000318"/>
    <property type="project" value="GO_Central"/>
</dbReference>
<dbReference type="GO" id="GO:0007204">
    <property type="term" value="P:positive regulation of cytosolic calcium ion concentration"/>
    <property type="evidence" value="ECO:0000318"/>
    <property type="project" value="GO_Central"/>
</dbReference>
<dbReference type="FunFam" id="1.20.1070.10:FF:000034">
    <property type="entry name" value="G-protein coupled receptor 1"/>
    <property type="match status" value="1"/>
</dbReference>
<dbReference type="Gene3D" id="1.20.1070.10">
    <property type="entry name" value="Rhodopsin 7-helix transmembrane proteins"/>
    <property type="match status" value="1"/>
</dbReference>
<dbReference type="InterPro" id="IPR000826">
    <property type="entry name" value="Formyl_rcpt-rel"/>
</dbReference>
<dbReference type="InterPro" id="IPR000276">
    <property type="entry name" value="GPCR_Rhodpsn"/>
</dbReference>
<dbReference type="InterPro" id="IPR017452">
    <property type="entry name" value="GPCR_Rhodpsn_7TM"/>
</dbReference>
<dbReference type="PANTHER" id="PTHR24225">
    <property type="entry name" value="CHEMOTACTIC RECEPTOR"/>
    <property type="match status" value="1"/>
</dbReference>
<dbReference type="PANTHER" id="PTHR24225:SF15">
    <property type="entry name" value="FMET-LEU-PHE RECEPTOR"/>
    <property type="match status" value="1"/>
</dbReference>
<dbReference type="Pfam" id="PF00001">
    <property type="entry name" value="7tm_1"/>
    <property type="match status" value="1"/>
</dbReference>
<dbReference type="PRINTS" id="PR00526">
    <property type="entry name" value="FMETLEUPHER"/>
</dbReference>
<dbReference type="PRINTS" id="PR00237">
    <property type="entry name" value="GPCRRHODOPSN"/>
</dbReference>
<dbReference type="SUPFAM" id="SSF81321">
    <property type="entry name" value="Family A G protein-coupled receptor-like"/>
    <property type="match status" value="1"/>
</dbReference>
<dbReference type="PROSITE" id="PS00237">
    <property type="entry name" value="G_PROTEIN_RECEP_F1_1"/>
    <property type="match status" value="1"/>
</dbReference>
<dbReference type="PROSITE" id="PS50262">
    <property type="entry name" value="G_PROTEIN_RECEP_F1_2"/>
    <property type="match status" value="1"/>
</dbReference>
<reference key="1">
    <citation type="journal article" date="1996" name="Immunogenetics">
        <title>Molecular evolution of the N-formyl peptide and C5a receptors in non-human primates.</title>
        <authorList>
            <person name="Alvarez V."/>
            <person name="Coto E."/>
            <person name="Sehen F."/>
            <person name="Gouzalek-Koces S."/>
            <person name="Lopez-Larrea C."/>
        </authorList>
    </citation>
    <scope>NUCLEOTIDE SEQUENCE [GENOMIC DNA]</scope>
</reference>
<protein>
    <recommendedName>
        <fullName>fMet-Leu-Phe receptor</fullName>
        <shortName>fMLP receptor</shortName>
    </recommendedName>
    <alternativeName>
        <fullName>N-formyl peptide receptor</fullName>
        <shortName>FPR</shortName>
    </alternativeName>
    <alternativeName>
        <fullName>N-formylpeptide chemoattractant receptor</fullName>
    </alternativeName>
</protein>
<sequence length="346" mass="38099">NSSLPTNISGGTPAVSAGYLFLDIITYLVFAVTFVLGVLGNGLVIWVAGFRMRHTVTTISYLNLAVADFCFTSTLPFLMVVKVMRGHWPFGWFLCKFIFTIVDINLFGSVFLIALIALDRCVCVLHPVWTQNHRTVSLAKKVIIGPWVMALLLTLPVIIRVTTVPGKTGTVACTFDFSPWTNDPVEKLKVTIAMLTVRGIIRFIIGFSVPMSIVAVSYGLIATKIHKQGLIKSSRPLRVLSFVVAAFFLCWSPYQVVAFIATVRLRNILQGLSKELRIAVDATSALAFFNSCLNPMLYVFMGQDFRERLIHSLPTSLERALTEDSAQTSDTATNSTLPSAEVPLQA</sequence>
<organism>
    <name type="scientific">Macaca mulatta</name>
    <name type="common">Rhesus macaque</name>
    <dbReference type="NCBI Taxonomy" id="9544"/>
    <lineage>
        <taxon>Eukaryota</taxon>
        <taxon>Metazoa</taxon>
        <taxon>Chordata</taxon>
        <taxon>Craniata</taxon>
        <taxon>Vertebrata</taxon>
        <taxon>Euteleostomi</taxon>
        <taxon>Mammalia</taxon>
        <taxon>Eutheria</taxon>
        <taxon>Euarchontoglires</taxon>
        <taxon>Primates</taxon>
        <taxon>Haplorrhini</taxon>
        <taxon>Catarrhini</taxon>
        <taxon>Cercopithecidae</taxon>
        <taxon>Cercopithecinae</taxon>
        <taxon>Macaca</taxon>
    </lineage>
</organism>
<proteinExistence type="inferred from homology"/>
<accession>P79189</accession>
<comment type="function">
    <text evidence="1 2">High affinity receptor for N-formyl-methionyl peptides (fMLP), which are powerful neutrophil chemotactic factors. Binding of fMLP to the receptor stimulates intracellular calcium mobilization and superoxide anion release. This response is mediated via a G-protein that activates a phosphatidylinositol-calcium second messenger system (By similarity). Receptor for TAFA4, mediates its effects on chemoattracting macrophages, promoting phagocytosis and increasing ROS release (By similarity). Receptor for cathepsin CTSG, leading to increased phagocyte chemotaxis (By similarity).</text>
</comment>
<comment type="subcellular location">
    <subcellularLocation>
        <location evidence="1 2">Cell membrane</location>
        <topology evidence="3">Multi-pass membrane protein</topology>
    </subcellularLocation>
    <text evidence="1">Internalizes in presence of its ligand, TAFA4.</text>
</comment>
<comment type="PTM">
    <text evidence="1">Phosphorylated; which is necessary for desensitization.</text>
</comment>
<comment type="similarity">
    <text evidence="4">Belongs to the G-protein coupled receptor 1 family.</text>
</comment>
<keyword id="KW-1003">Cell membrane</keyword>
<keyword id="KW-0145">Chemotaxis</keyword>
<keyword id="KW-1015">Disulfide bond</keyword>
<keyword id="KW-0297">G-protein coupled receptor</keyword>
<keyword id="KW-0325">Glycoprotein</keyword>
<keyword id="KW-0472">Membrane</keyword>
<keyword id="KW-0597">Phosphoprotein</keyword>
<keyword id="KW-0675">Receptor</keyword>
<keyword id="KW-1185">Reference proteome</keyword>
<keyword id="KW-0807">Transducer</keyword>
<keyword id="KW-0812">Transmembrane</keyword>
<keyword id="KW-1133">Transmembrane helix</keyword>
<name>FPR1_MACMU</name>
<gene>
    <name type="primary">FPR1</name>
</gene>